<sequence>MEKVKIIGGGLAGSEAAWQLAKRKIPVEIYEMRPIVTTPVHKTEYLAELVCSNSFKSTEITNASGLLKEEMRKLDSLLLRVAEETRVPAGVALAVDRELFSKRVQEILLESPYVTVIREEVKKLPKEGIVIVATGPLTSSDFAEHLMEVLDTDSLYFYDAVSPIIYADSINYEKVFSASRYGKGEETYLNCPMTKEEYERFVEELINAETVESHYPGEEKFFEGCLPIEVLAKRGIDTLRYGPMKPIGLIDPKTGKEPYAVVQLRPENIQKTLYSMVGFQTRLKFQEQRRIFRMIPGLENAEFARYGVMHRNTYFYAPKFLKATLQFIKDERVFFAGQLIGVEGYMESAAMGIVAGINAARLYKGKPLIILPPTTMIGALISYVTTKVPVRYYQPMNANWGILLPLDKPIKDKKLRNRLLAERALRDLEDVIRRFAINV</sequence>
<feature type="chain" id="PRO_1000149471" description="Methylenetetrahydrofolate--tRNA-(uracil-5-)-methyltransferase TrmFO">
    <location>
        <begin position="1"/>
        <end position="439"/>
    </location>
</feature>
<feature type="binding site" evidence="1">
    <location>
        <begin position="8"/>
        <end position="13"/>
    </location>
    <ligand>
        <name>FAD</name>
        <dbReference type="ChEBI" id="CHEBI:57692"/>
    </ligand>
</feature>
<organism>
    <name type="scientific">Dictyoglomus turgidum (strain DSM 6724 / Z-1310)</name>
    <dbReference type="NCBI Taxonomy" id="515635"/>
    <lineage>
        <taxon>Bacteria</taxon>
        <taxon>Pseudomonadati</taxon>
        <taxon>Dictyoglomota</taxon>
        <taxon>Dictyoglomia</taxon>
        <taxon>Dictyoglomales</taxon>
        <taxon>Dictyoglomaceae</taxon>
        <taxon>Dictyoglomus</taxon>
    </lineage>
</organism>
<reference key="1">
    <citation type="journal article" date="2016" name="Front. Microbiol.">
        <title>The complete genome sequence of hyperthermophile Dictyoglomus turgidum DSM 6724 reveals a specialized carbohydrate fermentor.</title>
        <authorList>
            <person name="Brumm P.J."/>
            <person name="Gowda K."/>
            <person name="Robb F.T."/>
            <person name="Mead D.A."/>
        </authorList>
    </citation>
    <scope>NUCLEOTIDE SEQUENCE [LARGE SCALE GENOMIC DNA]</scope>
    <source>
        <strain>DSM 6724 / Z-1310</strain>
    </source>
</reference>
<evidence type="ECO:0000255" key="1">
    <source>
        <dbReference type="HAMAP-Rule" id="MF_01037"/>
    </source>
</evidence>
<gene>
    <name evidence="1" type="primary">trmFO</name>
    <name type="ordered locus">Dtur_1525</name>
</gene>
<comment type="function">
    <text evidence="1">Catalyzes the folate-dependent formation of 5-methyl-uridine at position 54 (M-5-U54) in all tRNAs.</text>
</comment>
<comment type="catalytic activity">
    <reaction evidence="1">
        <text>uridine(54) in tRNA + (6R)-5,10-methylene-5,6,7,8-tetrahydrofolate + NADH + H(+) = 5-methyluridine(54) in tRNA + (6S)-5,6,7,8-tetrahydrofolate + NAD(+)</text>
        <dbReference type="Rhea" id="RHEA:16873"/>
        <dbReference type="Rhea" id="RHEA-COMP:10167"/>
        <dbReference type="Rhea" id="RHEA-COMP:10193"/>
        <dbReference type="ChEBI" id="CHEBI:15378"/>
        <dbReference type="ChEBI" id="CHEBI:15636"/>
        <dbReference type="ChEBI" id="CHEBI:57453"/>
        <dbReference type="ChEBI" id="CHEBI:57540"/>
        <dbReference type="ChEBI" id="CHEBI:57945"/>
        <dbReference type="ChEBI" id="CHEBI:65315"/>
        <dbReference type="ChEBI" id="CHEBI:74447"/>
        <dbReference type="EC" id="2.1.1.74"/>
    </reaction>
</comment>
<comment type="catalytic activity">
    <reaction evidence="1">
        <text>uridine(54) in tRNA + (6R)-5,10-methylene-5,6,7,8-tetrahydrofolate + NADPH + H(+) = 5-methyluridine(54) in tRNA + (6S)-5,6,7,8-tetrahydrofolate + NADP(+)</text>
        <dbReference type="Rhea" id="RHEA:62372"/>
        <dbReference type="Rhea" id="RHEA-COMP:10167"/>
        <dbReference type="Rhea" id="RHEA-COMP:10193"/>
        <dbReference type="ChEBI" id="CHEBI:15378"/>
        <dbReference type="ChEBI" id="CHEBI:15636"/>
        <dbReference type="ChEBI" id="CHEBI:57453"/>
        <dbReference type="ChEBI" id="CHEBI:57783"/>
        <dbReference type="ChEBI" id="CHEBI:58349"/>
        <dbReference type="ChEBI" id="CHEBI:65315"/>
        <dbReference type="ChEBI" id="CHEBI:74447"/>
        <dbReference type="EC" id="2.1.1.74"/>
    </reaction>
</comment>
<comment type="cofactor">
    <cofactor evidence="1">
        <name>FAD</name>
        <dbReference type="ChEBI" id="CHEBI:57692"/>
    </cofactor>
</comment>
<comment type="subcellular location">
    <subcellularLocation>
        <location evidence="1">Cytoplasm</location>
    </subcellularLocation>
</comment>
<comment type="similarity">
    <text evidence="1">Belongs to the MnmG family. TrmFO subfamily.</text>
</comment>
<keyword id="KW-0963">Cytoplasm</keyword>
<keyword id="KW-0274">FAD</keyword>
<keyword id="KW-0285">Flavoprotein</keyword>
<keyword id="KW-0489">Methyltransferase</keyword>
<keyword id="KW-0520">NAD</keyword>
<keyword id="KW-0521">NADP</keyword>
<keyword id="KW-1185">Reference proteome</keyword>
<keyword id="KW-0808">Transferase</keyword>
<keyword id="KW-0819">tRNA processing</keyword>
<accession>B8E2F5</accession>
<protein>
    <recommendedName>
        <fullName evidence="1">Methylenetetrahydrofolate--tRNA-(uracil-5-)-methyltransferase TrmFO</fullName>
        <ecNumber evidence="1">2.1.1.74</ecNumber>
    </recommendedName>
    <alternativeName>
        <fullName evidence="1">Folate-dependent tRNA (uracil-5-)-methyltransferase</fullName>
    </alternativeName>
    <alternativeName>
        <fullName evidence="1">Folate-dependent tRNA(M-5-U54)-methyltransferase</fullName>
    </alternativeName>
</protein>
<proteinExistence type="inferred from homology"/>
<dbReference type="EC" id="2.1.1.74" evidence="1"/>
<dbReference type="EMBL" id="CP001251">
    <property type="protein sequence ID" value="ACK42799.1"/>
    <property type="molecule type" value="Genomic_DNA"/>
</dbReference>
<dbReference type="RefSeq" id="WP_012583875.1">
    <property type="nucleotide sequence ID" value="NC_011661.1"/>
</dbReference>
<dbReference type="RefSeq" id="YP_002353413.1">
    <property type="nucleotide sequence ID" value="NC_011661.1"/>
</dbReference>
<dbReference type="SMR" id="B8E2F5"/>
<dbReference type="FunCoup" id="B8E2F5">
    <property type="interactions" value="9"/>
</dbReference>
<dbReference type="STRING" id="515635.Dtur_1525"/>
<dbReference type="EnsemblBacteria" id="ACK42799">
    <property type="protein sequence ID" value="ACK42799"/>
    <property type="gene ID" value="Dtur_1525"/>
</dbReference>
<dbReference type="KEGG" id="dtu:Dtur_1525"/>
<dbReference type="PATRIC" id="fig|515635.4.peg.1574"/>
<dbReference type="eggNOG" id="COG1206">
    <property type="taxonomic scope" value="Bacteria"/>
</dbReference>
<dbReference type="HOGENOM" id="CLU_033057_1_0_0"/>
<dbReference type="InParanoid" id="B8E2F5"/>
<dbReference type="OrthoDB" id="9803114at2"/>
<dbReference type="Proteomes" id="UP000007719">
    <property type="component" value="Chromosome"/>
</dbReference>
<dbReference type="GO" id="GO:0005829">
    <property type="term" value="C:cytosol"/>
    <property type="evidence" value="ECO:0000318"/>
    <property type="project" value="GO_Central"/>
</dbReference>
<dbReference type="GO" id="GO:0050660">
    <property type="term" value="F:flavin adenine dinucleotide binding"/>
    <property type="evidence" value="ECO:0000318"/>
    <property type="project" value="GO_Central"/>
</dbReference>
<dbReference type="GO" id="GO:0047151">
    <property type="term" value="F:tRNA (uracil(54)-C5)-methyltransferase activity, 5,10-methylenetetrahydrofolate-dependent"/>
    <property type="evidence" value="ECO:0007669"/>
    <property type="project" value="UniProtKB-UniRule"/>
</dbReference>
<dbReference type="GO" id="GO:0030488">
    <property type="term" value="P:tRNA methylation"/>
    <property type="evidence" value="ECO:0000318"/>
    <property type="project" value="GO_Central"/>
</dbReference>
<dbReference type="GO" id="GO:0002098">
    <property type="term" value="P:tRNA wobble uridine modification"/>
    <property type="evidence" value="ECO:0000318"/>
    <property type="project" value="GO_Central"/>
</dbReference>
<dbReference type="FunFam" id="3.50.50.60:FF:000035">
    <property type="entry name" value="Methylenetetrahydrofolate--tRNA-(uracil-5-)-methyltransferase TrmFO"/>
    <property type="match status" value="1"/>
</dbReference>
<dbReference type="Gene3D" id="3.50.50.60">
    <property type="entry name" value="FAD/NAD(P)-binding domain"/>
    <property type="match status" value="2"/>
</dbReference>
<dbReference type="HAMAP" id="MF_01037">
    <property type="entry name" value="TrmFO"/>
    <property type="match status" value="1"/>
</dbReference>
<dbReference type="InterPro" id="IPR036188">
    <property type="entry name" value="FAD/NAD-bd_sf"/>
</dbReference>
<dbReference type="InterPro" id="IPR002218">
    <property type="entry name" value="MnmG-rel"/>
</dbReference>
<dbReference type="InterPro" id="IPR020595">
    <property type="entry name" value="MnmG-rel_CS"/>
</dbReference>
<dbReference type="InterPro" id="IPR040131">
    <property type="entry name" value="MnmG_N"/>
</dbReference>
<dbReference type="InterPro" id="IPR004417">
    <property type="entry name" value="TrmFO"/>
</dbReference>
<dbReference type="NCBIfam" id="TIGR00137">
    <property type="entry name" value="gid_trmFO"/>
    <property type="match status" value="1"/>
</dbReference>
<dbReference type="NCBIfam" id="NF003739">
    <property type="entry name" value="PRK05335.1"/>
    <property type="match status" value="1"/>
</dbReference>
<dbReference type="PANTHER" id="PTHR11806">
    <property type="entry name" value="GLUCOSE INHIBITED DIVISION PROTEIN A"/>
    <property type="match status" value="1"/>
</dbReference>
<dbReference type="PANTHER" id="PTHR11806:SF2">
    <property type="entry name" value="METHYLENETETRAHYDROFOLATE--TRNA-(URACIL-5-)-METHYLTRANSFERASE TRMFO"/>
    <property type="match status" value="1"/>
</dbReference>
<dbReference type="Pfam" id="PF01134">
    <property type="entry name" value="GIDA"/>
    <property type="match status" value="1"/>
</dbReference>
<dbReference type="SUPFAM" id="SSF51905">
    <property type="entry name" value="FAD/NAD(P)-binding domain"/>
    <property type="match status" value="1"/>
</dbReference>
<dbReference type="PROSITE" id="PS01281">
    <property type="entry name" value="GIDA_2"/>
    <property type="match status" value="1"/>
</dbReference>
<name>TRMFO_DICTD</name>